<keyword id="KW-0067">ATP-binding</keyword>
<keyword id="KW-0520">NAD</keyword>
<keyword id="KW-0547">Nucleotide-binding</keyword>
<keyword id="KW-0548">Nucleotidyltransferase</keyword>
<keyword id="KW-0662">Pyridine nucleotide biosynthesis</keyword>
<keyword id="KW-1185">Reference proteome</keyword>
<keyword id="KW-0808">Transferase</keyword>
<name>NADD_PELPB</name>
<proteinExistence type="inferred from homology"/>
<feature type="chain" id="PRO_1000100786" description="Probable nicotinate-nucleotide adenylyltransferase">
    <location>
        <begin position="1"/>
        <end position="214"/>
    </location>
</feature>
<comment type="function">
    <text evidence="1">Catalyzes the reversible adenylation of nicotinate mononucleotide (NaMN) to nicotinic acid adenine dinucleotide (NaAD).</text>
</comment>
<comment type="catalytic activity">
    <reaction evidence="1">
        <text>nicotinate beta-D-ribonucleotide + ATP + H(+) = deamido-NAD(+) + diphosphate</text>
        <dbReference type="Rhea" id="RHEA:22860"/>
        <dbReference type="ChEBI" id="CHEBI:15378"/>
        <dbReference type="ChEBI" id="CHEBI:30616"/>
        <dbReference type="ChEBI" id="CHEBI:33019"/>
        <dbReference type="ChEBI" id="CHEBI:57502"/>
        <dbReference type="ChEBI" id="CHEBI:58437"/>
        <dbReference type="EC" id="2.7.7.18"/>
    </reaction>
</comment>
<comment type="pathway">
    <text evidence="1">Cofactor biosynthesis; NAD(+) biosynthesis; deamido-NAD(+) from nicotinate D-ribonucleotide: step 1/1.</text>
</comment>
<comment type="similarity">
    <text evidence="1">Belongs to the NadD family.</text>
</comment>
<organism>
    <name type="scientific">Pelodictyon phaeoclathratiforme (strain DSM 5477 / BU-1)</name>
    <dbReference type="NCBI Taxonomy" id="324925"/>
    <lineage>
        <taxon>Bacteria</taxon>
        <taxon>Pseudomonadati</taxon>
        <taxon>Chlorobiota</taxon>
        <taxon>Chlorobiia</taxon>
        <taxon>Chlorobiales</taxon>
        <taxon>Chlorobiaceae</taxon>
        <taxon>Chlorobium/Pelodictyon group</taxon>
        <taxon>Pelodictyon</taxon>
    </lineage>
</organism>
<protein>
    <recommendedName>
        <fullName evidence="1">Probable nicotinate-nucleotide adenylyltransferase</fullName>
        <ecNumber evidence="1">2.7.7.18</ecNumber>
    </recommendedName>
    <alternativeName>
        <fullName evidence="1">Deamido-NAD(+) diphosphorylase</fullName>
    </alternativeName>
    <alternativeName>
        <fullName evidence="1">Deamido-NAD(+) pyrophosphorylase</fullName>
    </alternativeName>
    <alternativeName>
        <fullName evidence="1">Nicotinate mononucleotide adenylyltransferase</fullName>
        <shortName evidence="1">NaMN adenylyltransferase</shortName>
    </alternativeName>
</protein>
<accession>B4SH35</accession>
<dbReference type="EC" id="2.7.7.18" evidence="1"/>
<dbReference type="EMBL" id="CP001110">
    <property type="protein sequence ID" value="ACF45023.1"/>
    <property type="molecule type" value="Genomic_DNA"/>
</dbReference>
<dbReference type="RefSeq" id="WP_012509491.1">
    <property type="nucleotide sequence ID" value="NC_011060.1"/>
</dbReference>
<dbReference type="SMR" id="B4SH35"/>
<dbReference type="STRING" id="324925.Ppha_2880"/>
<dbReference type="KEGG" id="pph:Ppha_2880"/>
<dbReference type="eggNOG" id="COG1057">
    <property type="taxonomic scope" value="Bacteria"/>
</dbReference>
<dbReference type="HOGENOM" id="CLU_069765_3_2_10"/>
<dbReference type="OrthoDB" id="5295945at2"/>
<dbReference type="UniPathway" id="UPA00253">
    <property type="reaction ID" value="UER00332"/>
</dbReference>
<dbReference type="Proteomes" id="UP000002724">
    <property type="component" value="Chromosome"/>
</dbReference>
<dbReference type="GO" id="GO:0005524">
    <property type="term" value="F:ATP binding"/>
    <property type="evidence" value="ECO:0007669"/>
    <property type="project" value="UniProtKB-KW"/>
</dbReference>
<dbReference type="GO" id="GO:0004515">
    <property type="term" value="F:nicotinate-nucleotide adenylyltransferase activity"/>
    <property type="evidence" value="ECO:0007669"/>
    <property type="project" value="UniProtKB-UniRule"/>
</dbReference>
<dbReference type="GO" id="GO:0009435">
    <property type="term" value="P:NAD biosynthetic process"/>
    <property type="evidence" value="ECO:0007669"/>
    <property type="project" value="UniProtKB-UniRule"/>
</dbReference>
<dbReference type="CDD" id="cd02165">
    <property type="entry name" value="NMNAT"/>
    <property type="match status" value="1"/>
</dbReference>
<dbReference type="Gene3D" id="3.40.50.620">
    <property type="entry name" value="HUPs"/>
    <property type="match status" value="1"/>
</dbReference>
<dbReference type="HAMAP" id="MF_00244">
    <property type="entry name" value="NaMN_adenylyltr"/>
    <property type="match status" value="1"/>
</dbReference>
<dbReference type="InterPro" id="IPR004821">
    <property type="entry name" value="Cyt_trans-like"/>
</dbReference>
<dbReference type="InterPro" id="IPR005248">
    <property type="entry name" value="NadD/NMNAT"/>
</dbReference>
<dbReference type="InterPro" id="IPR014729">
    <property type="entry name" value="Rossmann-like_a/b/a_fold"/>
</dbReference>
<dbReference type="NCBIfam" id="TIGR00125">
    <property type="entry name" value="cyt_tran_rel"/>
    <property type="match status" value="1"/>
</dbReference>
<dbReference type="NCBIfam" id="TIGR00482">
    <property type="entry name" value="nicotinate (nicotinamide) nucleotide adenylyltransferase"/>
    <property type="match status" value="1"/>
</dbReference>
<dbReference type="PANTHER" id="PTHR39321">
    <property type="entry name" value="NICOTINATE-NUCLEOTIDE ADENYLYLTRANSFERASE-RELATED"/>
    <property type="match status" value="1"/>
</dbReference>
<dbReference type="PANTHER" id="PTHR39321:SF3">
    <property type="entry name" value="PHOSPHOPANTETHEINE ADENYLYLTRANSFERASE"/>
    <property type="match status" value="1"/>
</dbReference>
<dbReference type="Pfam" id="PF01467">
    <property type="entry name" value="CTP_transf_like"/>
    <property type="match status" value="1"/>
</dbReference>
<dbReference type="SUPFAM" id="SSF52374">
    <property type="entry name" value="Nucleotidylyl transferase"/>
    <property type="match status" value="1"/>
</dbReference>
<gene>
    <name evidence="1" type="primary">nadD</name>
    <name type="ordered locus">Ppha_2880</name>
</gene>
<evidence type="ECO:0000255" key="1">
    <source>
        <dbReference type="HAMAP-Rule" id="MF_00244"/>
    </source>
</evidence>
<sequence length="214" mass="24007">MHLALFGATFDPPHNGHLALCLFARELLGIDKLIVSVSNNPFKPESGRADVHRMRMAELLTQEINLTGAFSEVSGWELEKKQPSYTVDLLRYLRTLYPADKLTLLVGEDSFREFSKWKESETFCSLSDVVVFRRVSTQSESTPRPEIIPCEACISFVNFACDISSTLVRSVVASGRSISTLVPPSVHRYIMEYGLYAGEEHHATSIPEPKPRES</sequence>
<reference key="1">
    <citation type="submission" date="2008-06" db="EMBL/GenBank/DDBJ databases">
        <title>Complete sequence of Pelodictyon phaeoclathratiforme BU-1.</title>
        <authorList>
            <consortium name="US DOE Joint Genome Institute"/>
            <person name="Lucas S."/>
            <person name="Copeland A."/>
            <person name="Lapidus A."/>
            <person name="Glavina del Rio T."/>
            <person name="Dalin E."/>
            <person name="Tice H."/>
            <person name="Bruce D."/>
            <person name="Goodwin L."/>
            <person name="Pitluck S."/>
            <person name="Schmutz J."/>
            <person name="Larimer F."/>
            <person name="Land M."/>
            <person name="Hauser L."/>
            <person name="Kyrpides N."/>
            <person name="Mikhailova N."/>
            <person name="Liu Z."/>
            <person name="Li T."/>
            <person name="Zhao F."/>
            <person name="Overmann J."/>
            <person name="Bryant D.A."/>
            <person name="Richardson P."/>
        </authorList>
    </citation>
    <scope>NUCLEOTIDE SEQUENCE [LARGE SCALE GENOMIC DNA]</scope>
    <source>
        <strain>DSM 5477 / BU-1</strain>
    </source>
</reference>